<organism>
    <name type="scientific">Erythrobacter litoralis (strain HTCC2594)</name>
    <dbReference type="NCBI Taxonomy" id="314225"/>
    <lineage>
        <taxon>Bacteria</taxon>
        <taxon>Pseudomonadati</taxon>
        <taxon>Pseudomonadota</taxon>
        <taxon>Alphaproteobacteria</taxon>
        <taxon>Sphingomonadales</taxon>
        <taxon>Erythrobacteraceae</taxon>
        <taxon>Erythrobacter/Porphyrobacter group</taxon>
        <taxon>Erythrobacter</taxon>
    </lineage>
</organism>
<gene>
    <name evidence="1" type="primary">nuoD</name>
    <name type="ordered locus">ELI_06675</name>
</gene>
<reference key="1">
    <citation type="journal article" date="2009" name="J. Bacteriol.">
        <title>Complete genome sequence of Erythrobacter litoralis HTCC2594.</title>
        <authorList>
            <person name="Oh H.M."/>
            <person name="Giovannoni S.J."/>
            <person name="Ferriera S."/>
            <person name="Johnson J."/>
            <person name="Cho J.C."/>
        </authorList>
    </citation>
    <scope>NUCLEOTIDE SEQUENCE [LARGE SCALE GENOMIC DNA]</scope>
    <source>
        <strain>HTCC2594</strain>
    </source>
</reference>
<protein>
    <recommendedName>
        <fullName evidence="1">NADH-quinone oxidoreductase subunit D</fullName>
        <ecNumber evidence="1">7.1.1.-</ecNumber>
    </recommendedName>
    <alternativeName>
        <fullName evidence="1">NADH dehydrogenase I subunit D</fullName>
    </alternativeName>
    <alternativeName>
        <fullName evidence="1">NDH-1 subunit D</fullName>
    </alternativeName>
</protein>
<sequence length="403" mass="45650">MSVHIEESPTTDGDVITNYTINFGPQHPAAHGVLRMIMELDGEIIERVDPHVGLLHRGTEKLIEHKTYLQALPYFDRLDYCSPLCMEHSYVLAIEKLLNIEVPERAQYLRVLFAELTRISNHMLNLGAHVLDVGAFTPNLWMFELREDCMNFFERASGARMHMAWFRPGGVHQDVPEKLLVDIGEWLDTRLPELFGDAMSLVLDNRIFKQRNVDIAVVSKDDAVKWGFSGPMIRAAGIPWDLRKSQPYDVYDRMEFDIPVGTNSDCYDRFSVRVKEVYESAKIIKQCLAQMPQGPIASTDGKVSPPSRGRMKQSMEALIHHFKLYTEGFHVPAGEVYVATESPKGEFGVYLVADGTNKPYRCKIRPTAFSHLQAMDFMSKGHMLPDATAILGAIDVVFGECDR</sequence>
<comment type="function">
    <text evidence="1">NDH-1 shuttles electrons from NADH, via FMN and iron-sulfur (Fe-S) centers, to quinones in the respiratory chain. The immediate electron acceptor for the enzyme in this species is believed to be ubiquinone. Couples the redox reaction to proton translocation (for every two electrons transferred, four hydrogen ions are translocated across the cytoplasmic membrane), and thus conserves the redox energy in a proton gradient.</text>
</comment>
<comment type="catalytic activity">
    <reaction evidence="1">
        <text>a quinone + NADH + 5 H(+)(in) = a quinol + NAD(+) + 4 H(+)(out)</text>
        <dbReference type="Rhea" id="RHEA:57888"/>
        <dbReference type="ChEBI" id="CHEBI:15378"/>
        <dbReference type="ChEBI" id="CHEBI:24646"/>
        <dbReference type="ChEBI" id="CHEBI:57540"/>
        <dbReference type="ChEBI" id="CHEBI:57945"/>
        <dbReference type="ChEBI" id="CHEBI:132124"/>
    </reaction>
</comment>
<comment type="subunit">
    <text evidence="1">NDH-1 is composed of 14 different subunits. Subunits NuoB, C, D, E, F, and G constitute the peripheral sector of the complex.</text>
</comment>
<comment type="subcellular location">
    <subcellularLocation>
        <location evidence="1">Cell inner membrane</location>
        <topology evidence="1">Peripheral membrane protein</topology>
        <orientation evidence="1">Cytoplasmic side</orientation>
    </subcellularLocation>
</comment>
<comment type="similarity">
    <text evidence="1">Belongs to the complex I 49 kDa subunit family.</text>
</comment>
<accession>Q2NA64</accession>
<feature type="chain" id="PRO_0000357813" description="NADH-quinone oxidoreductase subunit D">
    <location>
        <begin position="1"/>
        <end position="403"/>
    </location>
</feature>
<keyword id="KW-0997">Cell inner membrane</keyword>
<keyword id="KW-1003">Cell membrane</keyword>
<keyword id="KW-0472">Membrane</keyword>
<keyword id="KW-0520">NAD</keyword>
<keyword id="KW-0874">Quinone</keyword>
<keyword id="KW-1185">Reference proteome</keyword>
<keyword id="KW-1278">Translocase</keyword>
<keyword id="KW-0813">Transport</keyword>
<keyword id="KW-0830">Ubiquinone</keyword>
<proteinExistence type="inferred from homology"/>
<name>NUOD_ERYLH</name>
<dbReference type="EC" id="7.1.1.-" evidence="1"/>
<dbReference type="EMBL" id="CP000157">
    <property type="protein sequence ID" value="ABC63427.1"/>
    <property type="molecule type" value="Genomic_DNA"/>
</dbReference>
<dbReference type="RefSeq" id="WP_011414263.1">
    <property type="nucleotide sequence ID" value="NC_007722.1"/>
</dbReference>
<dbReference type="SMR" id="Q2NA64"/>
<dbReference type="STRING" id="314225.ELI_06675"/>
<dbReference type="KEGG" id="eli:ELI_06675"/>
<dbReference type="eggNOG" id="COG0649">
    <property type="taxonomic scope" value="Bacteria"/>
</dbReference>
<dbReference type="HOGENOM" id="CLU_015134_1_1_5"/>
<dbReference type="OrthoDB" id="9801496at2"/>
<dbReference type="Proteomes" id="UP000008808">
    <property type="component" value="Chromosome"/>
</dbReference>
<dbReference type="GO" id="GO:0005886">
    <property type="term" value="C:plasma membrane"/>
    <property type="evidence" value="ECO:0007669"/>
    <property type="project" value="UniProtKB-SubCell"/>
</dbReference>
<dbReference type="GO" id="GO:0051287">
    <property type="term" value="F:NAD binding"/>
    <property type="evidence" value="ECO:0007669"/>
    <property type="project" value="InterPro"/>
</dbReference>
<dbReference type="GO" id="GO:0050136">
    <property type="term" value="F:NADH:ubiquinone reductase (non-electrogenic) activity"/>
    <property type="evidence" value="ECO:0007669"/>
    <property type="project" value="UniProtKB-UniRule"/>
</dbReference>
<dbReference type="GO" id="GO:0048038">
    <property type="term" value="F:quinone binding"/>
    <property type="evidence" value="ECO:0007669"/>
    <property type="project" value="UniProtKB-KW"/>
</dbReference>
<dbReference type="FunFam" id="1.10.645.10:FF:000005">
    <property type="entry name" value="NADH-quinone oxidoreductase subunit D"/>
    <property type="match status" value="1"/>
</dbReference>
<dbReference type="Gene3D" id="1.10.645.10">
    <property type="entry name" value="Cytochrome-c3 Hydrogenase, chain B"/>
    <property type="match status" value="1"/>
</dbReference>
<dbReference type="HAMAP" id="MF_01358">
    <property type="entry name" value="NDH1_NuoD"/>
    <property type="match status" value="1"/>
</dbReference>
<dbReference type="InterPro" id="IPR001135">
    <property type="entry name" value="NADH_Q_OxRdtase_suD"/>
</dbReference>
<dbReference type="InterPro" id="IPR014029">
    <property type="entry name" value="NADH_UbQ_OxRdtase_49kDa_CS"/>
</dbReference>
<dbReference type="InterPro" id="IPR022885">
    <property type="entry name" value="NDH1_su_D/H"/>
</dbReference>
<dbReference type="InterPro" id="IPR029014">
    <property type="entry name" value="NiFe-Hase_large"/>
</dbReference>
<dbReference type="NCBIfam" id="TIGR01962">
    <property type="entry name" value="NuoD"/>
    <property type="match status" value="1"/>
</dbReference>
<dbReference type="NCBIfam" id="NF004739">
    <property type="entry name" value="PRK06075.1"/>
    <property type="match status" value="1"/>
</dbReference>
<dbReference type="PANTHER" id="PTHR11993:SF10">
    <property type="entry name" value="NADH DEHYDROGENASE [UBIQUINONE] IRON-SULFUR PROTEIN 2, MITOCHONDRIAL"/>
    <property type="match status" value="1"/>
</dbReference>
<dbReference type="PANTHER" id="PTHR11993">
    <property type="entry name" value="NADH-UBIQUINONE OXIDOREDUCTASE 49 KDA SUBUNIT"/>
    <property type="match status" value="1"/>
</dbReference>
<dbReference type="Pfam" id="PF00346">
    <property type="entry name" value="Complex1_49kDa"/>
    <property type="match status" value="1"/>
</dbReference>
<dbReference type="SUPFAM" id="SSF56762">
    <property type="entry name" value="HydB/Nqo4-like"/>
    <property type="match status" value="1"/>
</dbReference>
<dbReference type="PROSITE" id="PS00535">
    <property type="entry name" value="COMPLEX1_49K"/>
    <property type="match status" value="1"/>
</dbReference>
<evidence type="ECO:0000255" key="1">
    <source>
        <dbReference type="HAMAP-Rule" id="MF_01358"/>
    </source>
</evidence>